<protein>
    <recommendedName>
        <fullName>Cytochrome c oxidase subunit 2</fullName>
        <ecNumber>7.1.1.9</ecNumber>
    </recommendedName>
    <alternativeName>
        <fullName>Cytochrome c oxidase polypeptide II</fullName>
    </alternativeName>
</protein>
<keyword id="KW-0186">Copper</keyword>
<keyword id="KW-0249">Electron transport</keyword>
<keyword id="KW-0460">Magnesium</keyword>
<keyword id="KW-0472">Membrane</keyword>
<keyword id="KW-0479">Metal-binding</keyword>
<keyword id="KW-0496">Mitochondrion</keyword>
<keyword id="KW-0999">Mitochondrion inner membrane</keyword>
<keyword id="KW-0597">Phosphoprotein</keyword>
<keyword id="KW-1185">Reference proteome</keyword>
<keyword id="KW-0679">Respiratory chain</keyword>
<keyword id="KW-1278">Translocase</keyword>
<keyword id="KW-0812">Transmembrane</keyword>
<keyword id="KW-1133">Transmembrane helix</keyword>
<keyword id="KW-0813">Transport</keyword>
<organism>
    <name type="scientific">Rattus norvegicus</name>
    <name type="common">Rat</name>
    <dbReference type="NCBI Taxonomy" id="10116"/>
    <lineage>
        <taxon>Eukaryota</taxon>
        <taxon>Metazoa</taxon>
        <taxon>Chordata</taxon>
        <taxon>Craniata</taxon>
        <taxon>Vertebrata</taxon>
        <taxon>Euteleostomi</taxon>
        <taxon>Mammalia</taxon>
        <taxon>Eutheria</taxon>
        <taxon>Euarchontoglires</taxon>
        <taxon>Glires</taxon>
        <taxon>Rodentia</taxon>
        <taxon>Myomorpha</taxon>
        <taxon>Muroidea</taxon>
        <taxon>Muridae</taxon>
        <taxon>Murinae</taxon>
        <taxon>Rattus</taxon>
    </lineage>
</organism>
<name>COX2_RAT</name>
<gene>
    <name evidence="5" type="primary">Mt-co2</name>
    <name type="synonym">Coii</name>
    <name type="synonym">COX2</name>
    <name type="synonym">Mtco2</name>
</gene>
<geneLocation type="mitochondrion"/>
<comment type="function">
    <text evidence="2">Component of the cytochrome c oxidase, the last enzyme in the mitochondrial electron transport chain which drives oxidative phosphorylation. The respiratory chain contains 3 multisubunit complexes succinate dehydrogenase (complex II, CII), ubiquinol-cytochrome c oxidoreductase (cytochrome b-c1 complex, complex III, CIII) and cytochrome c oxidase (complex IV, CIV), that cooperate to transfer electrons derived from NADH and succinate to molecular oxygen, creating an electrochemical gradient over the inner membrane that drives transmembrane transport and the ATP synthase. Cytochrome c oxidase is the component of the respiratory chain that catalyzes the reduction of oxygen to water. Electrons originating from reduced cytochrome c in the intermembrane space (IMS) are transferred via the dinuclear copper A center (CU(A)) of subunit 2 and heme A of subunit 1 to the active site in subunit 1, a binuclear center (BNC) formed by heme A3 and copper B (CU(B)). The BNC reduces molecular oxygen to 2 water molecules using 4 electrons from cytochrome c in the IMS and 4 protons from the mitochondrial matrix.</text>
</comment>
<comment type="catalytic activity">
    <reaction evidence="2">
        <text>4 Fe(II)-[cytochrome c] + O2 + 8 H(+)(in) = 4 Fe(III)-[cytochrome c] + 2 H2O + 4 H(+)(out)</text>
        <dbReference type="Rhea" id="RHEA:11436"/>
        <dbReference type="Rhea" id="RHEA-COMP:10350"/>
        <dbReference type="Rhea" id="RHEA-COMP:14399"/>
        <dbReference type="ChEBI" id="CHEBI:15377"/>
        <dbReference type="ChEBI" id="CHEBI:15378"/>
        <dbReference type="ChEBI" id="CHEBI:15379"/>
        <dbReference type="ChEBI" id="CHEBI:29033"/>
        <dbReference type="ChEBI" id="CHEBI:29034"/>
        <dbReference type="EC" id="7.1.1.9"/>
    </reaction>
    <physiologicalReaction direction="left-to-right" evidence="2">
        <dbReference type="Rhea" id="RHEA:11437"/>
    </physiologicalReaction>
</comment>
<comment type="cofactor">
    <cofactor evidence="3">
        <name>Cu cation</name>
        <dbReference type="ChEBI" id="CHEBI:23378"/>
    </cofactor>
    <text evidence="3">Binds a dinuclear copper A center per subunit.</text>
</comment>
<comment type="subunit">
    <text evidence="1 3">Component of the cytochrome c oxidase (complex IV, CIV), a multisubunit enzyme composed of 14 subunits. The complex is composed of a catalytic core of 3 subunits MT-CO1, MT-CO2 and MT-CO3, encoded in the mitochondrial DNA, and 11 supernumerary subunits COX4I, COX5A, COX5B, COX6A, COX6B, COX6C, COX7A, COX7B, COX7C, COX8 and NDUFA4, which are encoded in the nuclear genome. The complex exists as a monomer or a dimer and forms supercomplexes (SCs) in the inner mitochondrial membrane with NADH-ubiquinone oxidoreductase (complex I, CI) and ubiquinol-cytochrome c oxidoreductase (cytochrome b-c1 complex, complex III, CIII), resulting in different assemblies (supercomplex SCI(1)III(2)IV(1) and megacomplex MCI(2)III(2)IV(2)) (By similarity). Found in a complex with TMEM177, COA6, COX18, COX20, SCO1 and SCO2. Interacts with TMEM177 in a COX20-dependent manner. Interacts with COX20. Interacts with COX16 (By similarity).</text>
</comment>
<comment type="subcellular location">
    <subcellularLocation>
        <location evidence="3">Mitochondrion inner membrane</location>
        <topology evidence="3">Multi-pass membrane protein</topology>
    </subcellularLocation>
</comment>
<comment type="similarity">
    <text evidence="4">Belongs to the cytochrome c oxidase subunit 2 family.</text>
</comment>
<proteinExistence type="evidence at protein level"/>
<evidence type="ECO:0000250" key="1">
    <source>
        <dbReference type="UniProtKB" id="P00403"/>
    </source>
</evidence>
<evidence type="ECO:0000250" key="2">
    <source>
        <dbReference type="UniProtKB" id="P00410"/>
    </source>
</evidence>
<evidence type="ECO:0000250" key="3">
    <source>
        <dbReference type="UniProtKB" id="P68530"/>
    </source>
</evidence>
<evidence type="ECO:0000305" key="4"/>
<evidence type="ECO:0000312" key="5">
    <source>
        <dbReference type="RGD" id="621872"/>
    </source>
</evidence>
<evidence type="ECO:0007744" key="6">
    <source>
    </source>
</evidence>
<accession>P00406</accession>
<accession>Q37738</accession>
<accession>Q80WI7</accession>
<dbReference type="EC" id="7.1.1.9"/>
<dbReference type="EMBL" id="J01434">
    <property type="protein sequence ID" value="AAA67374.1"/>
    <property type="molecule type" value="Genomic_DNA"/>
</dbReference>
<dbReference type="EMBL" id="M27315">
    <property type="protein sequence ID" value="AAB00992.1"/>
    <property type="molecule type" value="Genomic_DNA"/>
</dbReference>
<dbReference type="EMBL" id="X14848">
    <property type="protein sequence ID" value="CAA32957.1"/>
    <property type="molecule type" value="Genomic_DNA"/>
</dbReference>
<dbReference type="EMBL" id="M64496">
    <property type="protein sequence ID" value="AAA67314.1"/>
    <property type="molecule type" value="Genomic_DNA"/>
</dbReference>
<dbReference type="EMBL" id="AY172581">
    <property type="protein sequence ID" value="AAN77597.1"/>
    <property type="molecule type" value="Genomic_DNA"/>
</dbReference>
<dbReference type="EMBL" id="S74342">
    <property type="protein sequence ID" value="AAP31514.1"/>
    <property type="molecule type" value="mRNA"/>
</dbReference>
<dbReference type="PIR" id="A93914">
    <property type="entry name" value="OBRT2"/>
</dbReference>
<dbReference type="PIR" id="B93914">
    <property type="entry name" value="OBRT2B"/>
</dbReference>
<dbReference type="RefSeq" id="AP_004895.1">
    <property type="nucleotide sequence ID" value="AC_000022.2"/>
</dbReference>
<dbReference type="RefSeq" id="YP_665632.1">
    <property type="nucleotide sequence ID" value="NC_001665.2"/>
</dbReference>
<dbReference type="SMR" id="P00406"/>
<dbReference type="CORUM" id="P00406"/>
<dbReference type="FunCoup" id="P00406">
    <property type="interactions" value="85"/>
</dbReference>
<dbReference type="IntAct" id="P00406">
    <property type="interactions" value="1"/>
</dbReference>
<dbReference type="MINT" id="P00406"/>
<dbReference type="STRING" id="10116.ENSRNOP00000046414"/>
<dbReference type="iPTMnet" id="P00406"/>
<dbReference type="PhosphoSitePlus" id="P00406"/>
<dbReference type="SwissPalm" id="P00406"/>
<dbReference type="jPOST" id="P00406"/>
<dbReference type="PaxDb" id="10116-ENSRNOP00000046414"/>
<dbReference type="Ensembl" id="ENSRNOT00000043693.3">
    <property type="protein sequence ID" value="ENSRNOP00000046414.3"/>
    <property type="gene ID" value="ENSRNOG00000030371.3"/>
</dbReference>
<dbReference type="GeneID" id="26198"/>
<dbReference type="KEGG" id="rno:26198"/>
<dbReference type="AGR" id="RGD:621872"/>
<dbReference type="CTD" id="4513"/>
<dbReference type="RGD" id="621872">
    <property type="gene designation" value="Mt-co2"/>
</dbReference>
<dbReference type="eggNOG" id="KOG4767">
    <property type="taxonomic scope" value="Eukaryota"/>
</dbReference>
<dbReference type="GeneTree" id="ENSGT00390000017410"/>
<dbReference type="HOGENOM" id="CLU_036876_2_3_1"/>
<dbReference type="InParanoid" id="P00406"/>
<dbReference type="OMA" id="WSYEYTD"/>
<dbReference type="OrthoDB" id="28196at9989"/>
<dbReference type="Reactome" id="R-RNO-5628897">
    <property type="pathway name" value="TP53 Regulates Metabolic Genes"/>
</dbReference>
<dbReference type="Reactome" id="R-RNO-611105">
    <property type="pathway name" value="Respiratory electron transport"/>
</dbReference>
<dbReference type="Reactome" id="R-RNO-9707564">
    <property type="pathway name" value="Cytoprotection by HMOX1"/>
</dbReference>
<dbReference type="Reactome" id="R-RNO-9864848">
    <property type="pathway name" value="Complex IV assembly"/>
</dbReference>
<dbReference type="PRO" id="PR:P00406"/>
<dbReference type="Proteomes" id="UP000002494">
    <property type="component" value="Mitochondrion"/>
</dbReference>
<dbReference type="Bgee" id="ENSRNOG00000030371">
    <property type="expression patterns" value="Expressed in ovary and 19 other cell types or tissues"/>
</dbReference>
<dbReference type="ExpressionAtlas" id="P00406">
    <property type="expression patterns" value="baseline and differential"/>
</dbReference>
<dbReference type="GO" id="GO:0005743">
    <property type="term" value="C:mitochondrial inner membrane"/>
    <property type="evidence" value="ECO:0000266"/>
    <property type="project" value="RGD"/>
</dbReference>
<dbReference type="GO" id="GO:0031966">
    <property type="term" value="C:mitochondrial membrane"/>
    <property type="evidence" value="ECO:0000266"/>
    <property type="project" value="RGD"/>
</dbReference>
<dbReference type="GO" id="GO:0005739">
    <property type="term" value="C:mitochondrion"/>
    <property type="evidence" value="ECO:0000266"/>
    <property type="project" value="RGD"/>
</dbReference>
<dbReference type="GO" id="GO:0045277">
    <property type="term" value="C:respiratory chain complex IV"/>
    <property type="evidence" value="ECO:0000250"/>
    <property type="project" value="UniProtKB"/>
</dbReference>
<dbReference type="GO" id="GO:0005507">
    <property type="term" value="F:copper ion binding"/>
    <property type="evidence" value="ECO:0007669"/>
    <property type="project" value="InterPro"/>
</dbReference>
<dbReference type="GO" id="GO:0004129">
    <property type="term" value="F:cytochrome-c oxidase activity"/>
    <property type="evidence" value="ECO:0007669"/>
    <property type="project" value="UniProtKB-EC"/>
</dbReference>
<dbReference type="GO" id="GO:0042773">
    <property type="term" value="P:ATP synthesis coupled electron transport"/>
    <property type="evidence" value="ECO:0000318"/>
    <property type="project" value="GO_Central"/>
</dbReference>
<dbReference type="GO" id="GO:0007595">
    <property type="term" value="P:lactation"/>
    <property type="evidence" value="ECO:0000270"/>
    <property type="project" value="RGD"/>
</dbReference>
<dbReference type="GO" id="GO:0045907">
    <property type="term" value="P:positive regulation of vasoconstriction"/>
    <property type="evidence" value="ECO:0000266"/>
    <property type="project" value="RGD"/>
</dbReference>
<dbReference type="GO" id="GO:0045471">
    <property type="term" value="P:response to ethanol"/>
    <property type="evidence" value="ECO:0000270"/>
    <property type="project" value="RGD"/>
</dbReference>
<dbReference type="GO" id="GO:0001666">
    <property type="term" value="P:response to hypoxia"/>
    <property type="evidence" value="ECO:0000270"/>
    <property type="project" value="RGD"/>
</dbReference>
<dbReference type="CDD" id="cd13912">
    <property type="entry name" value="CcO_II_C"/>
    <property type="match status" value="1"/>
</dbReference>
<dbReference type="FunFam" id="1.10.287.90:FF:000001">
    <property type="entry name" value="Cytochrome c oxidase subunit 2"/>
    <property type="match status" value="1"/>
</dbReference>
<dbReference type="FunFam" id="2.60.40.420:FF:000001">
    <property type="entry name" value="Cytochrome c oxidase subunit 2"/>
    <property type="match status" value="1"/>
</dbReference>
<dbReference type="Gene3D" id="1.10.287.90">
    <property type="match status" value="1"/>
</dbReference>
<dbReference type="Gene3D" id="2.60.40.420">
    <property type="entry name" value="Cupredoxins - blue copper proteins"/>
    <property type="match status" value="1"/>
</dbReference>
<dbReference type="InterPro" id="IPR045187">
    <property type="entry name" value="CcO_II"/>
</dbReference>
<dbReference type="InterPro" id="IPR002429">
    <property type="entry name" value="CcO_II-like_C"/>
</dbReference>
<dbReference type="InterPro" id="IPR034210">
    <property type="entry name" value="CcO_II_C"/>
</dbReference>
<dbReference type="InterPro" id="IPR001505">
    <property type="entry name" value="Copper_CuA"/>
</dbReference>
<dbReference type="InterPro" id="IPR008972">
    <property type="entry name" value="Cupredoxin"/>
</dbReference>
<dbReference type="InterPro" id="IPR014222">
    <property type="entry name" value="Cyt_c_oxidase_su2"/>
</dbReference>
<dbReference type="InterPro" id="IPR011759">
    <property type="entry name" value="Cyt_c_oxidase_su2_TM_dom"/>
</dbReference>
<dbReference type="InterPro" id="IPR036257">
    <property type="entry name" value="Cyt_c_oxidase_su2_TM_sf"/>
</dbReference>
<dbReference type="NCBIfam" id="TIGR02866">
    <property type="entry name" value="CoxB"/>
    <property type="match status" value="1"/>
</dbReference>
<dbReference type="PANTHER" id="PTHR22888:SF9">
    <property type="entry name" value="CYTOCHROME C OXIDASE SUBUNIT 2"/>
    <property type="match status" value="1"/>
</dbReference>
<dbReference type="PANTHER" id="PTHR22888">
    <property type="entry name" value="CYTOCHROME C OXIDASE, SUBUNIT II"/>
    <property type="match status" value="1"/>
</dbReference>
<dbReference type="Pfam" id="PF00116">
    <property type="entry name" value="COX2"/>
    <property type="match status" value="1"/>
</dbReference>
<dbReference type="Pfam" id="PF02790">
    <property type="entry name" value="COX2_TM"/>
    <property type="match status" value="1"/>
</dbReference>
<dbReference type="PRINTS" id="PR01166">
    <property type="entry name" value="CYCOXIDASEII"/>
</dbReference>
<dbReference type="SUPFAM" id="SSF49503">
    <property type="entry name" value="Cupredoxins"/>
    <property type="match status" value="1"/>
</dbReference>
<dbReference type="SUPFAM" id="SSF81464">
    <property type="entry name" value="Cytochrome c oxidase subunit II-like, transmembrane region"/>
    <property type="match status" value="1"/>
</dbReference>
<dbReference type="PROSITE" id="PS00078">
    <property type="entry name" value="COX2"/>
    <property type="match status" value="1"/>
</dbReference>
<dbReference type="PROSITE" id="PS50857">
    <property type="entry name" value="COX2_CUA"/>
    <property type="match status" value="1"/>
</dbReference>
<dbReference type="PROSITE" id="PS50999">
    <property type="entry name" value="COX2_TM"/>
    <property type="match status" value="1"/>
</dbReference>
<sequence>MAYPFQLGLQDATSPIMEELTNFHDHTLMIVFLISSLVLYIISLMLTTKLTHTSTMDAQEVETIWTILPAVILILIALPSLRILYMMDEINNPVLTVKTMGHQWYWSYEYTDYEDLCFDSYMIPTNDLKPGELRLLEVDNRVVLPMELPIRMLISSEDVLHSWAVPSLGLKTDAIPGRLNQATVTSNRPGLFYGQCSEICGSNHSFMPIVLEMVPLKYFENWSASMI</sequence>
<reference key="1">
    <citation type="journal article" date="1982" name="Proc. Natl. Acad. Sci. U.S.A.">
        <title>Novel features of animal mtDNA evolution as shown by sequences of two rat cytochrome oxidase subunit II genes.</title>
        <authorList>
            <person name="Brown G.G."/>
            <person name="Simpson M.V."/>
        </authorList>
    </citation>
    <scope>NUCLEOTIDE SEQUENCE [GENOMIC DNA]</scope>
    <source>
        <strain>R.norvegicus</strain>
        <strain>R.rattus</strain>
    </source>
</reference>
<reference key="2">
    <citation type="journal article" date="1983" name="Biochem. Int.">
        <title>Non-random patterns of nucleotide substitutions and codon strategy in the mammalian mitochondrial genes coding for identified and unidentified reading frames.</title>
        <authorList>
            <person name="Pepe G."/>
            <person name="Holtrop M."/>
            <person name="Gadaleta G."/>
            <person name="Kroon A.M."/>
            <person name="Cantatore P."/>
            <person name="Gallerani R."/>
            <person name="de Benedetto C."/>
            <person name="Quagliariello C."/>
            <person name="Sbisa E."/>
            <person name="Saccone C."/>
        </authorList>
    </citation>
    <scope>NUCLEOTIDE SEQUENCE [GENOMIC DNA]</scope>
    <source>
        <strain>Wistar</strain>
    </source>
</reference>
<reference key="3">
    <citation type="journal article" date="1989" name="J. Mol. Evol.">
        <title>The complete nucleotide sequence of the Rattus norvegicus mitochondrial genome: cryptic signals revealed by comparative analysis between vertebrates.</title>
        <authorList>
            <person name="Gadaleta G."/>
            <person name="Pepe G."/>
            <person name="de Candia G."/>
            <person name="Quagliariello C."/>
            <person name="Sbisa E."/>
            <person name="Saccone C."/>
        </authorList>
    </citation>
    <scope>NUCLEOTIDE SEQUENCE [GENOMIC DNA]</scope>
    <source>
        <strain>Wistar</strain>
    </source>
</reference>
<reference key="4">
    <citation type="journal article" date="1981" name="Curr. Genet.">
        <title>Analysis of a DNA segment from rat liver mitochondria containing the genes for the cytochrome oxidase subunits I, II, II, ATPase subunit 6, and several tRNA genes.</title>
        <authorList>
            <person name="Grosskopf R."/>
            <person name="Feldmann H."/>
        </authorList>
    </citation>
    <scope>NUCLEOTIDE SEQUENCE</scope>
    <source>
        <strain>Sprague-Dawley</strain>
        <tissue>Liver</tissue>
    </source>
</reference>
<reference key="5">
    <citation type="journal article" date="1991" name="Biochemistry">
        <title>Conversion of a mitochondrial gene for mammalian cytochrome c oxidase subunit II into its universal codon equivalent and expression in vivo and in vitro.</title>
        <authorList>
            <person name="Cao J.L."/>
            <person name="Revzin A."/>
            <person name="Ferguson-Miller S."/>
        </authorList>
    </citation>
    <scope>NUCLEOTIDE SEQUENCE [GENOMIC DNA]</scope>
</reference>
<reference key="6">
    <citation type="journal article" date="2004" name="Nature">
        <title>Genome sequence of the Brown Norway rat yields insights into mammalian evolution.</title>
        <authorList>
            <person name="Gibbs R.A."/>
            <person name="Weinstock G.M."/>
            <person name="Metzker M.L."/>
            <person name="Muzny D.M."/>
            <person name="Sodergren E.J."/>
            <person name="Scherer S."/>
            <person name="Scott G."/>
            <person name="Steffen D."/>
            <person name="Worley K.C."/>
            <person name="Burch P.E."/>
            <person name="Okwuonu G."/>
            <person name="Hines S."/>
            <person name="Lewis L."/>
            <person name="Deramo C."/>
            <person name="Delgado O."/>
            <person name="Dugan-Rocha S."/>
            <person name="Miner G."/>
            <person name="Morgan M."/>
            <person name="Hawes A."/>
            <person name="Gill R."/>
            <person name="Holt R.A."/>
            <person name="Adams M.D."/>
            <person name="Amanatides P.G."/>
            <person name="Baden-Tillson H."/>
            <person name="Barnstead M."/>
            <person name="Chin S."/>
            <person name="Evans C.A."/>
            <person name="Ferriera S."/>
            <person name="Fosler C."/>
            <person name="Glodek A."/>
            <person name="Gu Z."/>
            <person name="Jennings D."/>
            <person name="Kraft C.L."/>
            <person name="Nguyen T."/>
            <person name="Pfannkoch C.M."/>
            <person name="Sitter C."/>
            <person name="Sutton G.G."/>
            <person name="Venter J.C."/>
            <person name="Woodage T."/>
            <person name="Smith D."/>
            <person name="Lee H.-M."/>
            <person name="Gustafson E."/>
            <person name="Cahill P."/>
            <person name="Kana A."/>
            <person name="Doucette-Stamm L."/>
            <person name="Weinstock K."/>
            <person name="Fechtel K."/>
            <person name="Weiss R.B."/>
            <person name="Dunn D.M."/>
            <person name="Green E.D."/>
            <person name="Blakesley R.W."/>
            <person name="Bouffard G.G."/>
            <person name="De Jong P.J."/>
            <person name="Osoegawa K."/>
            <person name="Zhu B."/>
            <person name="Marra M."/>
            <person name="Schein J."/>
            <person name="Bosdet I."/>
            <person name="Fjell C."/>
            <person name="Jones S."/>
            <person name="Krzywinski M."/>
            <person name="Mathewson C."/>
            <person name="Siddiqui A."/>
            <person name="Wye N."/>
            <person name="McPherson J."/>
            <person name="Zhao S."/>
            <person name="Fraser C.M."/>
            <person name="Shetty J."/>
            <person name="Shatsman S."/>
            <person name="Geer K."/>
            <person name="Chen Y."/>
            <person name="Abramzon S."/>
            <person name="Nierman W.C."/>
            <person name="Havlak P.H."/>
            <person name="Chen R."/>
            <person name="Durbin K.J."/>
            <person name="Egan A."/>
            <person name="Ren Y."/>
            <person name="Song X.-Z."/>
            <person name="Li B."/>
            <person name="Liu Y."/>
            <person name="Qin X."/>
            <person name="Cawley S."/>
            <person name="Cooney A.J."/>
            <person name="D'Souza L.M."/>
            <person name="Martin K."/>
            <person name="Wu J.Q."/>
            <person name="Gonzalez-Garay M.L."/>
            <person name="Jackson A.R."/>
            <person name="Kalafus K.J."/>
            <person name="McLeod M.P."/>
            <person name="Milosavljevic A."/>
            <person name="Virk D."/>
            <person name="Volkov A."/>
            <person name="Wheeler D.A."/>
            <person name="Zhang Z."/>
            <person name="Bailey J.A."/>
            <person name="Eichler E.E."/>
            <person name="Tuzun E."/>
            <person name="Birney E."/>
            <person name="Mongin E."/>
            <person name="Ureta-Vidal A."/>
            <person name="Woodwark C."/>
            <person name="Zdobnov E."/>
            <person name="Bork P."/>
            <person name="Suyama M."/>
            <person name="Torrents D."/>
            <person name="Alexandersson M."/>
            <person name="Trask B.J."/>
            <person name="Young J.M."/>
            <person name="Huang H."/>
            <person name="Wang H."/>
            <person name="Xing H."/>
            <person name="Daniels S."/>
            <person name="Gietzen D."/>
            <person name="Schmidt J."/>
            <person name="Stevens K."/>
            <person name="Vitt U."/>
            <person name="Wingrove J."/>
            <person name="Camara F."/>
            <person name="Mar Alba M."/>
            <person name="Abril J.F."/>
            <person name="Guigo R."/>
            <person name="Smit A."/>
            <person name="Dubchak I."/>
            <person name="Rubin E.M."/>
            <person name="Couronne O."/>
            <person name="Poliakov A."/>
            <person name="Huebner N."/>
            <person name="Ganten D."/>
            <person name="Goesele C."/>
            <person name="Hummel O."/>
            <person name="Kreitler T."/>
            <person name="Lee Y.-A."/>
            <person name="Monti J."/>
            <person name="Schulz H."/>
            <person name="Zimdahl H."/>
            <person name="Himmelbauer H."/>
            <person name="Lehrach H."/>
            <person name="Jacob H.J."/>
            <person name="Bromberg S."/>
            <person name="Gullings-Handley J."/>
            <person name="Jensen-Seaman M.I."/>
            <person name="Kwitek A.E."/>
            <person name="Lazar J."/>
            <person name="Pasko D."/>
            <person name="Tonellato P.J."/>
            <person name="Twigger S."/>
            <person name="Ponting C.P."/>
            <person name="Duarte J.M."/>
            <person name="Rice S."/>
            <person name="Goodstadt L."/>
            <person name="Beatson S.A."/>
            <person name="Emes R.D."/>
            <person name="Winter E.E."/>
            <person name="Webber C."/>
            <person name="Brandt P."/>
            <person name="Nyakatura G."/>
            <person name="Adetobi M."/>
            <person name="Chiaromonte F."/>
            <person name="Elnitski L."/>
            <person name="Eswara P."/>
            <person name="Hardison R.C."/>
            <person name="Hou M."/>
            <person name="Kolbe D."/>
            <person name="Makova K."/>
            <person name="Miller W."/>
            <person name="Nekrutenko A."/>
            <person name="Riemer C."/>
            <person name="Schwartz S."/>
            <person name="Taylor J."/>
            <person name="Yang S."/>
            <person name="Zhang Y."/>
            <person name="Lindpaintner K."/>
            <person name="Andrews T.D."/>
            <person name="Caccamo M."/>
            <person name="Clamp M."/>
            <person name="Clarke L."/>
            <person name="Curwen V."/>
            <person name="Durbin R.M."/>
            <person name="Eyras E."/>
            <person name="Searle S.M."/>
            <person name="Cooper G.M."/>
            <person name="Batzoglou S."/>
            <person name="Brudno M."/>
            <person name="Sidow A."/>
            <person name="Stone E.A."/>
            <person name="Payseur B.A."/>
            <person name="Bourque G."/>
            <person name="Lopez-Otin C."/>
            <person name="Puente X.S."/>
            <person name="Chakrabarti K."/>
            <person name="Chatterji S."/>
            <person name="Dewey C."/>
            <person name="Pachter L."/>
            <person name="Bray N."/>
            <person name="Yap V.B."/>
            <person name="Caspi A."/>
            <person name="Tesler G."/>
            <person name="Pevzner P.A."/>
            <person name="Haussler D."/>
            <person name="Roskin K.M."/>
            <person name="Baertsch R."/>
            <person name="Clawson H."/>
            <person name="Furey T.S."/>
            <person name="Hinrichs A.S."/>
            <person name="Karolchik D."/>
            <person name="Kent W.J."/>
            <person name="Rosenbloom K.R."/>
            <person name="Trumbower H."/>
            <person name="Weirauch M."/>
            <person name="Cooper D.N."/>
            <person name="Stenson P.D."/>
            <person name="Ma B."/>
            <person name="Brent M."/>
            <person name="Arumugam M."/>
            <person name="Shteynberg D."/>
            <person name="Copley R.R."/>
            <person name="Taylor M.S."/>
            <person name="Riethman H."/>
            <person name="Mudunuri U."/>
            <person name="Peterson J."/>
            <person name="Guyer M."/>
            <person name="Felsenfeld A."/>
            <person name="Old S."/>
            <person name="Mockrin S."/>
            <person name="Collins F.S."/>
        </authorList>
    </citation>
    <scope>NUCLEOTIDE SEQUENCE [LARGE SCALE GENOMIC DNA]</scope>
    <source>
        <strain>Brown Norway</strain>
    </source>
</reference>
<reference key="7">
    <citation type="journal article" date="1994" name="J. Steroid Biochem. Mol. Biol.">
        <title>Hormonal regulation of hypothalamic gene expression: identification of multiple novel estrogen induced genes.</title>
        <authorList>
            <person name="Law S.W."/>
            <person name="Apostolakis E.M."/>
            <person name="Samora P.J."/>
            <person name="O'Malley B.W."/>
            <person name="Clark J.H."/>
        </authorList>
    </citation>
    <scope>NUCLEOTIDE SEQUENCE [MRNA] OF 7-56</scope>
</reference>
<reference key="8">
    <citation type="journal article" date="2012" name="Nat. Commun.">
        <title>Quantitative maps of protein phosphorylation sites across 14 different rat organs and tissues.</title>
        <authorList>
            <person name="Lundby A."/>
            <person name="Secher A."/>
            <person name="Lage K."/>
            <person name="Nordsborg N.B."/>
            <person name="Dmytriyev A."/>
            <person name="Lundby C."/>
            <person name="Olsen J.V."/>
        </authorList>
    </citation>
    <scope>PHOSPHORYLATION [LARGE SCALE ANALYSIS] AT TYR-218</scope>
    <scope>IDENTIFICATION BY MASS SPECTROMETRY [LARGE SCALE ANALYSIS]</scope>
</reference>
<feature type="chain" id="PRO_0000183677" description="Cytochrome c oxidase subunit 2">
    <location>
        <begin position="1"/>
        <end position="227"/>
    </location>
</feature>
<feature type="topological domain" description="Mitochondrial intermembrane" evidence="3">
    <location>
        <begin position="1"/>
        <end position="14"/>
    </location>
</feature>
<feature type="transmembrane region" description="Helical; Name=I" evidence="3">
    <location>
        <begin position="15"/>
        <end position="45"/>
    </location>
</feature>
<feature type="topological domain" description="Mitochondrial matrix" evidence="3">
    <location>
        <begin position="46"/>
        <end position="59"/>
    </location>
</feature>
<feature type="transmembrane region" description="Helical; Name=II" evidence="3">
    <location>
        <begin position="60"/>
        <end position="87"/>
    </location>
</feature>
<feature type="topological domain" description="Mitochondrial intermembrane" evidence="3">
    <location>
        <begin position="88"/>
        <end position="227"/>
    </location>
</feature>
<feature type="binding site" evidence="3">
    <location>
        <position position="161"/>
    </location>
    <ligand>
        <name>Cu cation</name>
        <dbReference type="ChEBI" id="CHEBI:23378"/>
        <label>A1</label>
    </ligand>
</feature>
<feature type="binding site" evidence="3">
    <location>
        <position position="196"/>
    </location>
    <ligand>
        <name>Cu cation</name>
        <dbReference type="ChEBI" id="CHEBI:23378"/>
        <label>A1</label>
    </ligand>
</feature>
<feature type="binding site" evidence="3">
    <location>
        <position position="196"/>
    </location>
    <ligand>
        <name>Cu cation</name>
        <dbReference type="ChEBI" id="CHEBI:23378"/>
        <label>A2</label>
    </ligand>
</feature>
<feature type="binding site" evidence="3">
    <location>
        <position position="198"/>
    </location>
    <ligand>
        <name>Cu cation</name>
        <dbReference type="ChEBI" id="CHEBI:23378"/>
        <label>A2</label>
    </ligand>
</feature>
<feature type="binding site" evidence="3">
    <location>
        <position position="198"/>
    </location>
    <ligand>
        <name>Mg(2+)</name>
        <dbReference type="ChEBI" id="CHEBI:18420"/>
        <note>ligand shared with MT-CO1</note>
    </ligand>
</feature>
<feature type="binding site" evidence="3">
    <location>
        <position position="200"/>
    </location>
    <ligand>
        <name>Cu cation</name>
        <dbReference type="ChEBI" id="CHEBI:23378"/>
        <label>A1</label>
    </ligand>
</feature>
<feature type="binding site" evidence="3">
    <location>
        <position position="200"/>
    </location>
    <ligand>
        <name>Cu cation</name>
        <dbReference type="ChEBI" id="CHEBI:23378"/>
        <label>A2</label>
    </ligand>
</feature>
<feature type="binding site" evidence="3">
    <location>
        <position position="204"/>
    </location>
    <ligand>
        <name>Cu cation</name>
        <dbReference type="ChEBI" id="CHEBI:23378"/>
        <label>A2</label>
    </ligand>
</feature>
<feature type="binding site" evidence="3">
    <location>
        <position position="207"/>
    </location>
    <ligand>
        <name>Cu cation</name>
        <dbReference type="ChEBI" id="CHEBI:23378"/>
        <label>A1</label>
    </ligand>
</feature>
<feature type="modified residue" description="Phosphotyrosine" evidence="6">
    <location>
        <position position="218"/>
    </location>
</feature>
<feature type="sequence conflict" description="In Ref. 7; AAP31514." evidence="4" ref="7">
    <original>M</original>
    <variation>I</variation>
    <location>
        <position position="17"/>
    </location>
</feature>
<feature type="sequence conflict" description="In Ref. 1; AAA67374." evidence="4" ref="1">
    <original>T</original>
    <variation>M</variation>
    <location>
        <position position="21"/>
    </location>
</feature>
<feature type="sequence conflict" description="In Ref. 7; AAP31514." evidence="4" ref="7">
    <original>M</original>
    <variation>I</variation>
    <location>
        <position position="29"/>
    </location>
</feature>
<feature type="sequence conflict" description="In Ref. 7; AAP31514." evidence="4" ref="7">
    <original>M</original>
    <variation>I</variation>
    <location>
        <position position="45"/>
    </location>
</feature>
<feature type="sequence conflict" description="In Ref. 7; AAP31514." evidence="4" ref="7">
    <original>M</original>
    <variation>I</variation>
    <location>
        <position position="56"/>
    </location>
</feature>
<feature type="sequence conflict" description="In Ref. 5; AAA67314." evidence="4" ref="5">
    <original>Q</original>
    <variation>H</variation>
    <location>
        <position position="59"/>
    </location>
</feature>
<feature type="sequence conflict" description="In Ref. 4; no nucleotide entry and 5; AAA67314." evidence="4" ref="4 5">
    <original>P</original>
    <variation>L</variation>
    <location>
        <position position="130"/>
    </location>
</feature>
<feature type="sequence conflict" description="In Ref. 4; no nucleotide entry and 5; AAA67314." evidence="4" ref="4 5">
    <original>A</original>
    <variation>P</variation>
    <location>
        <position position="164"/>
    </location>
</feature>
<feature type="sequence conflict" description="In Ref. 2; AAB00992, 3; CAA32957 and 5; AAA67314." evidence="4" ref="2 3 5">
    <original>V</original>
    <variation>I</variation>
    <location>
        <position position="165"/>
    </location>
</feature>
<feature type="sequence conflict" description="In Ref. 5; AAA67314." evidence="4" ref="5">
    <original>L</original>
    <variation>P</variation>
    <location>
        <position position="179"/>
    </location>
</feature>
<feature type="sequence conflict" description="In Ref. 4; no nucleotide entry and 5; AAA67314." evidence="4" ref="4 5">
    <original>P</original>
    <variation>L</variation>
    <location>
        <position position="189"/>
    </location>
</feature>
<feature type="sequence conflict" description="In Ref. 4; no nucleotide entry and 5; AAA67314." evidence="4" ref="4 5">
    <original>P</original>
    <variation>L</variation>
    <location>
        <position position="208"/>
    </location>
</feature>
<feature type="sequence conflict" description="In Ref. 1; AAA67374." evidence="4" ref="1">
    <original>Y</original>
    <variation>H</variation>
    <location>
        <position position="218"/>
    </location>
</feature>